<protein>
    <recommendedName>
        <fullName evidence="1">Flavin-dependent thymidylate synthase</fullName>
        <shortName evidence="1">FDTS</shortName>
        <ecNumber evidence="1">2.1.1.148</ecNumber>
    </recommendedName>
    <alternativeName>
        <fullName evidence="1">FAD-dependent thymidylate synthase</fullName>
    </alternativeName>
    <alternativeName>
        <fullName evidence="1">Thymidylate synthase ThyX</fullName>
        <shortName evidence="1">TS</shortName>
        <shortName evidence="1">TSase</shortName>
    </alternativeName>
</protein>
<gene>
    <name evidence="1" type="primary">thyX</name>
    <name type="ordered locus">CTN_0223</name>
</gene>
<keyword id="KW-0274">FAD</keyword>
<keyword id="KW-0285">Flavoprotein</keyword>
<keyword id="KW-0489">Methyltransferase</keyword>
<keyword id="KW-0521">NADP</keyword>
<keyword id="KW-0545">Nucleotide biosynthesis</keyword>
<keyword id="KW-0808">Transferase</keyword>
<proteinExistence type="inferred from homology"/>
<comment type="function">
    <text evidence="1">Catalyzes the reductive methylation of 2'-deoxyuridine-5'-monophosphate (dUMP) to 2'-deoxythymidine-5'-monophosphate (dTMP) while utilizing 5,10-methylenetetrahydrofolate (mTHF) as the methyl donor, and NADPH and FADH(2) as the reductant.</text>
</comment>
<comment type="catalytic activity">
    <reaction evidence="1">
        <text>dUMP + (6R)-5,10-methylene-5,6,7,8-tetrahydrofolate + NADPH + H(+) = dTMP + (6S)-5,6,7,8-tetrahydrofolate + NADP(+)</text>
        <dbReference type="Rhea" id="RHEA:29043"/>
        <dbReference type="ChEBI" id="CHEBI:15378"/>
        <dbReference type="ChEBI" id="CHEBI:15636"/>
        <dbReference type="ChEBI" id="CHEBI:57453"/>
        <dbReference type="ChEBI" id="CHEBI:57783"/>
        <dbReference type="ChEBI" id="CHEBI:58349"/>
        <dbReference type="ChEBI" id="CHEBI:63528"/>
        <dbReference type="ChEBI" id="CHEBI:246422"/>
        <dbReference type="EC" id="2.1.1.148"/>
    </reaction>
</comment>
<comment type="cofactor">
    <cofactor evidence="1">
        <name>FAD</name>
        <dbReference type="ChEBI" id="CHEBI:57692"/>
    </cofactor>
    <text evidence="1">Binds 4 FAD per tetramer. Each FAD binding site is formed by three monomers.</text>
</comment>
<comment type="pathway">
    <text evidence="1">Pyrimidine metabolism; dTTP biosynthesis.</text>
</comment>
<comment type="subunit">
    <text evidence="1">Homotetramer.</text>
</comment>
<comment type="similarity">
    <text evidence="1">Belongs to the thymidylate synthase ThyX family.</text>
</comment>
<sequence>MKIPVLDKGFVELVDVMGNDLSAVRAARVSFNMELKDEEKDRRLVEYLMRHGHESPFEHIVFTFHVKAPIFVARQWFRHRIASYNELSGRYSKLTYEFYIPPLQRFGQTRIVPEKVIEKISHVVNESYQTYMELLEAGVPREVARIVLPLNLYTRFYWTVNARSLMNFLNLRADSHAQWEIQQYAVAIAKIFREKCPWTYEAFIKYAYKGDLLREV</sequence>
<dbReference type="EC" id="2.1.1.148" evidence="1"/>
<dbReference type="EMBL" id="CP000916">
    <property type="protein sequence ID" value="ACM22399.1"/>
    <property type="molecule type" value="Genomic_DNA"/>
</dbReference>
<dbReference type="RefSeq" id="WP_015918735.1">
    <property type="nucleotide sequence ID" value="NC_011978.1"/>
</dbReference>
<dbReference type="SMR" id="B9KBK3"/>
<dbReference type="STRING" id="309803.CTN_0223"/>
<dbReference type="KEGG" id="tna:CTN_0223"/>
<dbReference type="eggNOG" id="COG1351">
    <property type="taxonomic scope" value="Bacteria"/>
</dbReference>
<dbReference type="HOGENOM" id="CLU_067790_0_0_0"/>
<dbReference type="UniPathway" id="UPA00575"/>
<dbReference type="Proteomes" id="UP000000445">
    <property type="component" value="Chromosome"/>
</dbReference>
<dbReference type="GO" id="GO:0050660">
    <property type="term" value="F:flavin adenine dinucleotide binding"/>
    <property type="evidence" value="ECO:0007669"/>
    <property type="project" value="InterPro"/>
</dbReference>
<dbReference type="GO" id="GO:0070402">
    <property type="term" value="F:NADPH binding"/>
    <property type="evidence" value="ECO:0007669"/>
    <property type="project" value="TreeGrafter"/>
</dbReference>
<dbReference type="GO" id="GO:0050797">
    <property type="term" value="F:thymidylate synthase (FAD) activity"/>
    <property type="evidence" value="ECO:0007669"/>
    <property type="project" value="UniProtKB-UniRule"/>
</dbReference>
<dbReference type="GO" id="GO:0004799">
    <property type="term" value="F:thymidylate synthase activity"/>
    <property type="evidence" value="ECO:0007669"/>
    <property type="project" value="TreeGrafter"/>
</dbReference>
<dbReference type="GO" id="GO:0006231">
    <property type="term" value="P:dTMP biosynthetic process"/>
    <property type="evidence" value="ECO:0007669"/>
    <property type="project" value="UniProtKB-UniRule"/>
</dbReference>
<dbReference type="GO" id="GO:0006235">
    <property type="term" value="P:dTTP biosynthetic process"/>
    <property type="evidence" value="ECO:0007669"/>
    <property type="project" value="UniProtKB-UniRule"/>
</dbReference>
<dbReference type="GO" id="GO:0032259">
    <property type="term" value="P:methylation"/>
    <property type="evidence" value="ECO:0007669"/>
    <property type="project" value="UniProtKB-KW"/>
</dbReference>
<dbReference type="CDD" id="cd20175">
    <property type="entry name" value="ThyX"/>
    <property type="match status" value="1"/>
</dbReference>
<dbReference type="Gene3D" id="3.30.1360.170">
    <property type="match status" value="1"/>
</dbReference>
<dbReference type="HAMAP" id="MF_01408">
    <property type="entry name" value="ThyX"/>
    <property type="match status" value="1"/>
</dbReference>
<dbReference type="InterPro" id="IPR003669">
    <property type="entry name" value="Thymidylate_synthase_ThyX"/>
</dbReference>
<dbReference type="InterPro" id="IPR036098">
    <property type="entry name" value="Thymidylate_synthase_ThyX_sf"/>
</dbReference>
<dbReference type="NCBIfam" id="TIGR02170">
    <property type="entry name" value="thyX"/>
    <property type="match status" value="1"/>
</dbReference>
<dbReference type="PANTHER" id="PTHR34934">
    <property type="entry name" value="FLAVIN-DEPENDENT THYMIDYLATE SYNTHASE"/>
    <property type="match status" value="1"/>
</dbReference>
<dbReference type="PANTHER" id="PTHR34934:SF1">
    <property type="entry name" value="FLAVIN-DEPENDENT THYMIDYLATE SYNTHASE"/>
    <property type="match status" value="1"/>
</dbReference>
<dbReference type="Pfam" id="PF02511">
    <property type="entry name" value="Thy1"/>
    <property type="match status" value="1"/>
</dbReference>
<dbReference type="SUPFAM" id="SSF69796">
    <property type="entry name" value="Thymidylate synthase-complementing protein Thy1"/>
    <property type="match status" value="1"/>
</dbReference>
<dbReference type="PROSITE" id="PS51331">
    <property type="entry name" value="THYX"/>
    <property type="match status" value="1"/>
</dbReference>
<name>THYX_THENN</name>
<organism>
    <name type="scientific">Thermotoga neapolitana (strain ATCC 49049 / DSM 4359 / NBRC 107923 / NS-E)</name>
    <dbReference type="NCBI Taxonomy" id="309803"/>
    <lineage>
        <taxon>Bacteria</taxon>
        <taxon>Thermotogati</taxon>
        <taxon>Thermotogota</taxon>
        <taxon>Thermotogae</taxon>
        <taxon>Thermotogales</taxon>
        <taxon>Thermotogaceae</taxon>
        <taxon>Thermotoga</taxon>
    </lineage>
</organism>
<evidence type="ECO:0000255" key="1">
    <source>
        <dbReference type="HAMAP-Rule" id="MF_01408"/>
    </source>
</evidence>
<evidence type="ECO:0000255" key="2">
    <source>
        <dbReference type="PROSITE-ProRule" id="PRU00661"/>
    </source>
</evidence>
<accession>B9KBK3</accession>
<reference key="1">
    <citation type="submission" date="2007-11" db="EMBL/GenBank/DDBJ databases">
        <title>The genome sequence of the hyperthermophilic bacterium Thermotoga neapolitana.</title>
        <authorList>
            <person name="Lim S.K."/>
            <person name="Kim J.S."/>
            <person name="Cha S.H."/>
            <person name="Park B.C."/>
            <person name="Lee D.S."/>
            <person name="Tae H.S."/>
            <person name="Kim S.-J."/>
            <person name="Kim J.J."/>
            <person name="Park K.J."/>
            <person name="Lee S.Y."/>
        </authorList>
    </citation>
    <scope>NUCLEOTIDE SEQUENCE [LARGE SCALE GENOMIC DNA]</scope>
    <source>
        <strain>ATCC 49049 / DSM 4359 / NBRC 107923 / NS-E</strain>
    </source>
</reference>
<feature type="chain" id="PRO_1000184604" description="Flavin-dependent thymidylate synthase">
    <location>
        <begin position="1"/>
        <end position="216"/>
    </location>
</feature>
<feature type="domain" description="ThyX" evidence="2">
    <location>
        <begin position="9"/>
        <end position="206"/>
    </location>
</feature>
<feature type="short sequence motif" description="ThyX motif" evidence="1">
    <location>
        <begin position="78"/>
        <end position="88"/>
    </location>
</feature>
<feature type="active site" description="Involved in ionization of N3 of dUMP, leading to its activation" evidence="1">
    <location>
        <position position="172"/>
    </location>
</feature>
<feature type="binding site" evidence="1">
    <location>
        <position position="55"/>
    </location>
    <ligand>
        <name>FAD</name>
        <dbReference type="ChEBI" id="CHEBI:57692"/>
        <note>ligand shared between neighboring subunits</note>
    </ligand>
</feature>
<feature type="binding site" evidence="1">
    <location>
        <begin position="75"/>
        <end position="78"/>
    </location>
    <ligand>
        <name>dUMP</name>
        <dbReference type="ChEBI" id="CHEBI:246422"/>
        <note>ligand shared between dimeric partners</note>
    </ligand>
</feature>
<feature type="binding site" evidence="1">
    <location>
        <begin position="78"/>
        <end position="80"/>
    </location>
    <ligand>
        <name>FAD</name>
        <dbReference type="ChEBI" id="CHEBI:57692"/>
        <note>ligand shared between neighboring subunits</note>
    </ligand>
</feature>
<feature type="binding site" description="in other chain" evidence="1">
    <location>
        <begin position="86"/>
        <end position="90"/>
    </location>
    <ligand>
        <name>dUMP</name>
        <dbReference type="ChEBI" id="CHEBI:246422"/>
        <note>ligand shared between dimeric partners</note>
    </ligand>
</feature>
<feature type="binding site" evidence="1">
    <location>
        <position position="86"/>
    </location>
    <ligand>
        <name>FAD</name>
        <dbReference type="ChEBI" id="CHEBI:57692"/>
        <note>ligand shared between neighboring subunits</note>
    </ligand>
</feature>
<feature type="binding site" description="in other chain" evidence="1">
    <location>
        <position position="145"/>
    </location>
    <ligand>
        <name>dUMP</name>
        <dbReference type="ChEBI" id="CHEBI:246422"/>
        <note>ligand shared between dimeric partners</note>
    </ligand>
</feature>
<feature type="binding site" evidence="1">
    <location>
        <begin position="161"/>
        <end position="163"/>
    </location>
    <ligand>
        <name>FAD</name>
        <dbReference type="ChEBI" id="CHEBI:57692"/>
        <note>ligand shared between neighboring subunits</note>
    </ligand>
</feature>
<feature type="binding site" evidence="1">
    <location>
        <position position="167"/>
    </location>
    <ligand>
        <name>FAD</name>
        <dbReference type="ChEBI" id="CHEBI:57692"/>
        <note>ligand shared between neighboring subunits</note>
    </ligand>
</feature>
<feature type="binding site" evidence="1">
    <location>
        <position position="172"/>
    </location>
    <ligand>
        <name>dUMP</name>
        <dbReference type="ChEBI" id="CHEBI:246422"/>
        <note>ligand shared between dimeric partners</note>
    </ligand>
</feature>